<protein>
    <recommendedName>
        <fullName>U1-lycotoxin-Ls1bb</fullName>
    </recommendedName>
    <alternativeName>
        <fullName>Toxin-like structure LSTX-A44</fullName>
    </alternativeName>
</protein>
<feature type="signal peptide" evidence="2">
    <location>
        <begin position="1"/>
        <end position="20"/>
    </location>
</feature>
<feature type="propeptide" id="PRO_0000401583" evidence="1">
    <location>
        <begin position="21"/>
        <end position="44"/>
    </location>
</feature>
<feature type="chain" id="PRO_0000401584" description="U1-lycotoxin-Ls1bb">
    <location>
        <begin position="45"/>
        <end position="110"/>
    </location>
</feature>
<feature type="disulfide bond" evidence="1">
    <location>
        <begin position="47"/>
        <end position="62"/>
    </location>
</feature>
<feature type="disulfide bond" evidence="1">
    <location>
        <begin position="54"/>
        <end position="71"/>
    </location>
</feature>
<feature type="disulfide bond" evidence="1">
    <location>
        <begin position="61"/>
        <end position="89"/>
    </location>
</feature>
<feature type="disulfide bond" evidence="1">
    <location>
        <begin position="73"/>
        <end position="87"/>
    </location>
</feature>
<proteinExistence type="evidence at transcript level"/>
<organism>
    <name type="scientific">Lycosa singoriensis</name>
    <name type="common">Wolf spider</name>
    <name type="synonym">Aranea singoriensis</name>
    <dbReference type="NCBI Taxonomy" id="434756"/>
    <lineage>
        <taxon>Eukaryota</taxon>
        <taxon>Metazoa</taxon>
        <taxon>Ecdysozoa</taxon>
        <taxon>Arthropoda</taxon>
        <taxon>Chelicerata</taxon>
        <taxon>Arachnida</taxon>
        <taxon>Araneae</taxon>
        <taxon>Araneomorphae</taxon>
        <taxon>Entelegynae</taxon>
        <taxon>Lycosoidea</taxon>
        <taxon>Lycosidae</taxon>
        <taxon>Lycosa</taxon>
    </lineage>
</organism>
<dbReference type="EMBL" id="EU925967">
    <property type="protein sequence ID" value="ACI41299.1"/>
    <property type="molecule type" value="mRNA"/>
</dbReference>
<dbReference type="EMBL" id="FM863971">
    <property type="protein sequence ID" value="CAS03569.1"/>
    <property type="molecule type" value="mRNA"/>
</dbReference>
<dbReference type="SMR" id="B6DCN3"/>
<dbReference type="ArachnoServer" id="AS000916">
    <property type="toxin name" value="U1-lycotoxin-Ls1bb"/>
</dbReference>
<dbReference type="GO" id="GO:0005576">
    <property type="term" value="C:extracellular region"/>
    <property type="evidence" value="ECO:0007669"/>
    <property type="project" value="UniProtKB-SubCell"/>
</dbReference>
<dbReference type="GO" id="GO:0090729">
    <property type="term" value="F:toxin activity"/>
    <property type="evidence" value="ECO:0007669"/>
    <property type="project" value="UniProtKB-KW"/>
</dbReference>
<dbReference type="InterPro" id="IPR019553">
    <property type="entry name" value="Spider_toxin_CSTX_knottin"/>
</dbReference>
<dbReference type="InterPro" id="IPR011142">
    <property type="entry name" value="Spider_toxin_CSTX_Knottin_CS"/>
</dbReference>
<dbReference type="Pfam" id="PF10530">
    <property type="entry name" value="Toxin_35"/>
    <property type="match status" value="1"/>
</dbReference>
<dbReference type="PROSITE" id="PS60029">
    <property type="entry name" value="SPIDER_CSTX"/>
    <property type="match status" value="1"/>
</dbReference>
<reference key="1">
    <citation type="journal article" date="2010" name="Zoology">
        <title>Transcriptome analysis of the venom glands of the Chinese wolf spider Lycosa singoriensis.</title>
        <authorList>
            <person name="Zhang Y."/>
            <person name="Chen J."/>
            <person name="Tang X."/>
            <person name="Wang F."/>
            <person name="Jiang L."/>
            <person name="Xiong X."/>
            <person name="Wang M."/>
            <person name="Rong M."/>
            <person name="Liu Z."/>
            <person name="Liang S."/>
        </authorList>
    </citation>
    <scope>NUCLEOTIDE SEQUENCE [LARGE SCALE MRNA]</scope>
    <source>
        <tissue>Venom gland</tissue>
    </source>
</reference>
<keyword id="KW-1015">Disulfide bond</keyword>
<keyword id="KW-0960">Knottin</keyword>
<keyword id="KW-0964">Secreted</keyword>
<keyword id="KW-0732">Signal</keyword>
<keyword id="KW-0800">Toxin</keyword>
<accession>B6DCN3</accession>
<evidence type="ECO:0000250" key="1"/>
<evidence type="ECO:0000255" key="2"/>
<evidence type="ECO:0000305" key="3"/>
<name>TX144_LYCSI</name>
<sequence length="110" mass="12341">MKFVLLFGVLLVTLFSYSSAEMLDDFDQADEDELLSLIEKEEARKDCIPKHHECTSNKHGCCKGHLFKYKCQCTTVVTQSGEETERCFCGTPPHCKAAELVVGFGKKIFG</sequence>
<comment type="subcellular location">
    <subcellularLocation>
        <location evidence="1">Secreted</location>
    </subcellularLocation>
</comment>
<comment type="tissue specificity">
    <text>Expressed by the venom gland.</text>
</comment>
<comment type="domain">
    <text evidence="1">The presence of a 'disulfide through disulfide knot' structurally defines this protein as a knottin.</text>
</comment>
<comment type="similarity">
    <text evidence="3">Belongs to the neurotoxin 19 (CSTX) family. 03 subfamily.</text>
</comment>